<accession>A9FD62</accession>
<name>LIPA_SORC5</name>
<protein>
    <recommendedName>
        <fullName evidence="1">Lipoyl synthase</fullName>
        <ecNumber evidence="1">2.8.1.8</ecNumber>
    </recommendedName>
    <alternativeName>
        <fullName evidence="1">Lip-syn</fullName>
        <shortName evidence="1">LS</shortName>
    </alternativeName>
    <alternativeName>
        <fullName evidence="1">Lipoate synthase</fullName>
    </alternativeName>
    <alternativeName>
        <fullName evidence="1">Lipoic acid synthase</fullName>
    </alternativeName>
    <alternativeName>
        <fullName evidence="1">Sulfur insertion protein LipA</fullName>
    </alternativeName>
</protein>
<dbReference type="EC" id="2.8.1.8" evidence="1"/>
<dbReference type="EMBL" id="AM746676">
    <property type="protein sequence ID" value="CAN91731.1"/>
    <property type="molecule type" value="Genomic_DNA"/>
</dbReference>
<dbReference type="RefSeq" id="WP_012234208.1">
    <property type="nucleotide sequence ID" value="NC_010162.1"/>
</dbReference>
<dbReference type="SMR" id="A9FD62"/>
<dbReference type="STRING" id="448385.sce1573"/>
<dbReference type="KEGG" id="scl:sce1573"/>
<dbReference type="eggNOG" id="COG0320">
    <property type="taxonomic scope" value="Bacteria"/>
</dbReference>
<dbReference type="HOGENOM" id="CLU_033144_2_0_7"/>
<dbReference type="OrthoDB" id="9787898at2"/>
<dbReference type="BioCyc" id="SCEL448385:SCE_RS08110-MONOMER"/>
<dbReference type="UniPathway" id="UPA00538">
    <property type="reaction ID" value="UER00593"/>
</dbReference>
<dbReference type="Proteomes" id="UP000002139">
    <property type="component" value="Chromosome"/>
</dbReference>
<dbReference type="GO" id="GO:0005737">
    <property type="term" value="C:cytoplasm"/>
    <property type="evidence" value="ECO:0007669"/>
    <property type="project" value="UniProtKB-SubCell"/>
</dbReference>
<dbReference type="GO" id="GO:0051539">
    <property type="term" value="F:4 iron, 4 sulfur cluster binding"/>
    <property type="evidence" value="ECO:0007669"/>
    <property type="project" value="UniProtKB-UniRule"/>
</dbReference>
<dbReference type="GO" id="GO:0016992">
    <property type="term" value="F:lipoate synthase activity"/>
    <property type="evidence" value="ECO:0007669"/>
    <property type="project" value="UniProtKB-UniRule"/>
</dbReference>
<dbReference type="GO" id="GO:0046872">
    <property type="term" value="F:metal ion binding"/>
    <property type="evidence" value="ECO:0007669"/>
    <property type="project" value="UniProtKB-KW"/>
</dbReference>
<dbReference type="CDD" id="cd01335">
    <property type="entry name" value="Radical_SAM"/>
    <property type="match status" value="1"/>
</dbReference>
<dbReference type="Gene3D" id="3.20.20.70">
    <property type="entry name" value="Aldolase class I"/>
    <property type="match status" value="1"/>
</dbReference>
<dbReference type="HAMAP" id="MF_00206">
    <property type="entry name" value="Lipoyl_synth"/>
    <property type="match status" value="1"/>
</dbReference>
<dbReference type="InterPro" id="IPR013785">
    <property type="entry name" value="Aldolase_TIM"/>
</dbReference>
<dbReference type="InterPro" id="IPR006638">
    <property type="entry name" value="Elp3/MiaA/NifB-like_rSAM"/>
</dbReference>
<dbReference type="InterPro" id="IPR031691">
    <property type="entry name" value="LIAS_N"/>
</dbReference>
<dbReference type="InterPro" id="IPR003698">
    <property type="entry name" value="Lipoyl_synth"/>
</dbReference>
<dbReference type="InterPro" id="IPR007197">
    <property type="entry name" value="rSAM"/>
</dbReference>
<dbReference type="NCBIfam" id="TIGR00510">
    <property type="entry name" value="lipA"/>
    <property type="match status" value="1"/>
</dbReference>
<dbReference type="NCBIfam" id="NF004019">
    <property type="entry name" value="PRK05481.1"/>
    <property type="match status" value="1"/>
</dbReference>
<dbReference type="NCBIfam" id="NF009544">
    <property type="entry name" value="PRK12928.1"/>
    <property type="match status" value="1"/>
</dbReference>
<dbReference type="PANTHER" id="PTHR10949">
    <property type="entry name" value="LIPOYL SYNTHASE"/>
    <property type="match status" value="1"/>
</dbReference>
<dbReference type="PANTHER" id="PTHR10949:SF0">
    <property type="entry name" value="LIPOYL SYNTHASE, MITOCHONDRIAL"/>
    <property type="match status" value="1"/>
</dbReference>
<dbReference type="Pfam" id="PF16881">
    <property type="entry name" value="LIAS_N"/>
    <property type="match status" value="1"/>
</dbReference>
<dbReference type="Pfam" id="PF04055">
    <property type="entry name" value="Radical_SAM"/>
    <property type="match status" value="1"/>
</dbReference>
<dbReference type="PIRSF" id="PIRSF005963">
    <property type="entry name" value="Lipoyl_synth"/>
    <property type="match status" value="1"/>
</dbReference>
<dbReference type="SFLD" id="SFLDF00271">
    <property type="entry name" value="lipoyl_synthase"/>
    <property type="match status" value="1"/>
</dbReference>
<dbReference type="SFLD" id="SFLDG01058">
    <property type="entry name" value="lipoyl_synthase_like"/>
    <property type="match status" value="1"/>
</dbReference>
<dbReference type="SMART" id="SM00729">
    <property type="entry name" value="Elp3"/>
    <property type="match status" value="1"/>
</dbReference>
<dbReference type="SUPFAM" id="SSF102114">
    <property type="entry name" value="Radical SAM enzymes"/>
    <property type="match status" value="1"/>
</dbReference>
<dbReference type="PROSITE" id="PS51918">
    <property type="entry name" value="RADICAL_SAM"/>
    <property type="match status" value="1"/>
</dbReference>
<proteinExistence type="inferred from homology"/>
<sequence length="372" mass="40576">MAQFSPKPEWLKVRAPGGDTYHHLKETFRKLDLHTVCEEARCPNVGECWREGTATVMLLGDVCTRGCRFCAVTTGDPRGAVDVREPEHVARAIARLSLQYVVMTMVNRDDLLDGGAEHVARTVSRLHALRPDLLIETLVGDFQGHMSAVDMVVDAGPDVFAHNVEVVRRITRVIRDVRSSYDQSLAVLRRAKERQRRLAADAAEAGAPAPRRLTKSSIMVGIGETDDEVLEALRDLREAGVDIVTIGQYLRPSSKHAPVQRFVEPETFAAFERAALEMGFLYAASAPLVRSSYKAAEVFVRSLMDRGGAALPASPGAAAVEALLEERLAVARREAARLTAELDPDEPRPPVAPAPASASPARLVPAASLIRR</sequence>
<evidence type="ECO:0000255" key="1">
    <source>
        <dbReference type="HAMAP-Rule" id="MF_00206"/>
    </source>
</evidence>
<evidence type="ECO:0000255" key="2">
    <source>
        <dbReference type="PROSITE-ProRule" id="PRU01266"/>
    </source>
</evidence>
<evidence type="ECO:0000256" key="3">
    <source>
        <dbReference type="SAM" id="MobiDB-lite"/>
    </source>
</evidence>
<gene>
    <name evidence="1" type="primary">lipA</name>
    <name type="ordered locus">sce1573</name>
</gene>
<feature type="chain" id="PRO_1000077971" description="Lipoyl synthase">
    <location>
        <begin position="1"/>
        <end position="372"/>
    </location>
</feature>
<feature type="domain" description="Radical SAM core" evidence="2">
    <location>
        <begin position="49"/>
        <end position="281"/>
    </location>
</feature>
<feature type="region of interest" description="Disordered" evidence="3">
    <location>
        <begin position="338"/>
        <end position="372"/>
    </location>
</feature>
<feature type="compositionally biased region" description="Low complexity" evidence="3">
    <location>
        <begin position="354"/>
        <end position="372"/>
    </location>
</feature>
<feature type="binding site" evidence="1">
    <location>
        <position position="37"/>
    </location>
    <ligand>
        <name>[4Fe-4S] cluster</name>
        <dbReference type="ChEBI" id="CHEBI:49883"/>
        <label>1</label>
    </ligand>
</feature>
<feature type="binding site" evidence="1">
    <location>
        <position position="42"/>
    </location>
    <ligand>
        <name>[4Fe-4S] cluster</name>
        <dbReference type="ChEBI" id="CHEBI:49883"/>
        <label>1</label>
    </ligand>
</feature>
<feature type="binding site" evidence="1">
    <location>
        <position position="48"/>
    </location>
    <ligand>
        <name>[4Fe-4S] cluster</name>
        <dbReference type="ChEBI" id="CHEBI:49883"/>
        <label>1</label>
    </ligand>
</feature>
<feature type="binding site" evidence="1">
    <location>
        <position position="63"/>
    </location>
    <ligand>
        <name>[4Fe-4S] cluster</name>
        <dbReference type="ChEBI" id="CHEBI:49883"/>
        <label>2</label>
        <note>4Fe-4S-S-AdoMet</note>
    </ligand>
</feature>
<feature type="binding site" evidence="1">
    <location>
        <position position="67"/>
    </location>
    <ligand>
        <name>[4Fe-4S] cluster</name>
        <dbReference type="ChEBI" id="CHEBI:49883"/>
        <label>2</label>
        <note>4Fe-4S-S-AdoMet</note>
    </ligand>
</feature>
<feature type="binding site" evidence="1">
    <location>
        <position position="70"/>
    </location>
    <ligand>
        <name>[4Fe-4S] cluster</name>
        <dbReference type="ChEBI" id="CHEBI:49883"/>
        <label>2</label>
        <note>4Fe-4S-S-AdoMet</note>
    </ligand>
</feature>
<feature type="binding site" evidence="1">
    <location>
        <position position="292"/>
    </location>
    <ligand>
        <name>[4Fe-4S] cluster</name>
        <dbReference type="ChEBI" id="CHEBI:49883"/>
        <label>1</label>
    </ligand>
</feature>
<reference key="1">
    <citation type="journal article" date="2007" name="Nat. Biotechnol.">
        <title>Complete genome sequence of the myxobacterium Sorangium cellulosum.</title>
        <authorList>
            <person name="Schneiker S."/>
            <person name="Perlova O."/>
            <person name="Kaiser O."/>
            <person name="Gerth K."/>
            <person name="Alici A."/>
            <person name="Altmeyer M.O."/>
            <person name="Bartels D."/>
            <person name="Bekel T."/>
            <person name="Beyer S."/>
            <person name="Bode E."/>
            <person name="Bode H.B."/>
            <person name="Bolten C.J."/>
            <person name="Choudhuri J.V."/>
            <person name="Doss S."/>
            <person name="Elnakady Y.A."/>
            <person name="Frank B."/>
            <person name="Gaigalat L."/>
            <person name="Goesmann A."/>
            <person name="Groeger C."/>
            <person name="Gross F."/>
            <person name="Jelsbak L."/>
            <person name="Jelsbak L."/>
            <person name="Kalinowski J."/>
            <person name="Kegler C."/>
            <person name="Knauber T."/>
            <person name="Konietzny S."/>
            <person name="Kopp M."/>
            <person name="Krause L."/>
            <person name="Krug D."/>
            <person name="Linke B."/>
            <person name="Mahmud T."/>
            <person name="Martinez-Arias R."/>
            <person name="McHardy A.C."/>
            <person name="Merai M."/>
            <person name="Meyer F."/>
            <person name="Mormann S."/>
            <person name="Munoz-Dorado J."/>
            <person name="Perez J."/>
            <person name="Pradella S."/>
            <person name="Rachid S."/>
            <person name="Raddatz G."/>
            <person name="Rosenau F."/>
            <person name="Rueckert C."/>
            <person name="Sasse F."/>
            <person name="Scharfe M."/>
            <person name="Schuster S.C."/>
            <person name="Suen G."/>
            <person name="Treuner-Lange A."/>
            <person name="Velicer G.J."/>
            <person name="Vorholter F.-J."/>
            <person name="Weissman K.J."/>
            <person name="Welch R.D."/>
            <person name="Wenzel S.C."/>
            <person name="Whitworth D.E."/>
            <person name="Wilhelm S."/>
            <person name="Wittmann C."/>
            <person name="Bloecker H."/>
            <person name="Puehler A."/>
            <person name="Mueller R."/>
        </authorList>
    </citation>
    <scope>NUCLEOTIDE SEQUENCE [LARGE SCALE GENOMIC DNA]</scope>
    <source>
        <strain>So ce56</strain>
    </source>
</reference>
<comment type="function">
    <text evidence="1">Catalyzes the radical-mediated insertion of two sulfur atoms into the C-6 and C-8 positions of the octanoyl moiety bound to the lipoyl domains of lipoate-dependent enzymes, thereby converting the octanoylated domains into lipoylated derivatives.</text>
</comment>
<comment type="catalytic activity">
    <reaction evidence="1">
        <text>[[Fe-S] cluster scaffold protein carrying a second [4Fe-4S](2+) cluster] + N(6)-octanoyl-L-lysyl-[protein] + 2 oxidized [2Fe-2S]-[ferredoxin] + 2 S-adenosyl-L-methionine + 4 H(+) = [[Fe-S] cluster scaffold protein] + N(6)-[(R)-dihydrolipoyl]-L-lysyl-[protein] + 4 Fe(3+) + 2 hydrogen sulfide + 2 5'-deoxyadenosine + 2 L-methionine + 2 reduced [2Fe-2S]-[ferredoxin]</text>
        <dbReference type="Rhea" id="RHEA:16585"/>
        <dbReference type="Rhea" id="RHEA-COMP:9928"/>
        <dbReference type="Rhea" id="RHEA-COMP:10000"/>
        <dbReference type="Rhea" id="RHEA-COMP:10001"/>
        <dbReference type="Rhea" id="RHEA-COMP:10475"/>
        <dbReference type="Rhea" id="RHEA-COMP:14568"/>
        <dbReference type="Rhea" id="RHEA-COMP:14569"/>
        <dbReference type="ChEBI" id="CHEBI:15378"/>
        <dbReference type="ChEBI" id="CHEBI:17319"/>
        <dbReference type="ChEBI" id="CHEBI:29034"/>
        <dbReference type="ChEBI" id="CHEBI:29919"/>
        <dbReference type="ChEBI" id="CHEBI:33722"/>
        <dbReference type="ChEBI" id="CHEBI:33737"/>
        <dbReference type="ChEBI" id="CHEBI:33738"/>
        <dbReference type="ChEBI" id="CHEBI:57844"/>
        <dbReference type="ChEBI" id="CHEBI:59789"/>
        <dbReference type="ChEBI" id="CHEBI:78809"/>
        <dbReference type="ChEBI" id="CHEBI:83100"/>
        <dbReference type="EC" id="2.8.1.8"/>
    </reaction>
</comment>
<comment type="cofactor">
    <cofactor evidence="1">
        <name>[4Fe-4S] cluster</name>
        <dbReference type="ChEBI" id="CHEBI:49883"/>
    </cofactor>
    <text evidence="1">Binds 2 [4Fe-4S] clusters per subunit. One cluster is coordinated with 3 cysteines and an exchangeable S-adenosyl-L-methionine.</text>
</comment>
<comment type="pathway">
    <text evidence="1">Protein modification; protein lipoylation via endogenous pathway; protein N(6)-(lipoyl)lysine from octanoyl-[acyl-carrier-protein]: step 2/2.</text>
</comment>
<comment type="subcellular location">
    <subcellularLocation>
        <location evidence="1">Cytoplasm</location>
    </subcellularLocation>
</comment>
<comment type="similarity">
    <text evidence="1">Belongs to the radical SAM superfamily. Lipoyl synthase family.</text>
</comment>
<organism>
    <name type="scientific">Sorangium cellulosum (strain So ce56)</name>
    <name type="common">Polyangium cellulosum (strain So ce56)</name>
    <dbReference type="NCBI Taxonomy" id="448385"/>
    <lineage>
        <taxon>Bacteria</taxon>
        <taxon>Pseudomonadati</taxon>
        <taxon>Myxococcota</taxon>
        <taxon>Polyangia</taxon>
        <taxon>Polyangiales</taxon>
        <taxon>Polyangiaceae</taxon>
        <taxon>Sorangium</taxon>
    </lineage>
</organism>
<keyword id="KW-0004">4Fe-4S</keyword>
<keyword id="KW-0963">Cytoplasm</keyword>
<keyword id="KW-0408">Iron</keyword>
<keyword id="KW-0411">Iron-sulfur</keyword>
<keyword id="KW-0479">Metal-binding</keyword>
<keyword id="KW-1185">Reference proteome</keyword>
<keyword id="KW-0949">S-adenosyl-L-methionine</keyword>
<keyword id="KW-0808">Transferase</keyword>